<comment type="similarity">
    <text evidence="1">Belongs to the bacterial ribosomal protein bL34 family.</text>
</comment>
<feature type="chain" id="PRO_1000013306" description="Large ribosomal subunit protein bL34">
    <location>
        <begin position="1"/>
        <end position="44"/>
    </location>
</feature>
<accession>A7ZCY6</accession>
<proteinExistence type="inferred from homology"/>
<sequence length="44" mass="5273">MKRTYQPHKTPKKRTHGFRLRMKTKNGRKVINARRAKGRKRLAA</sequence>
<protein>
    <recommendedName>
        <fullName evidence="1">Large ribosomal subunit protein bL34</fullName>
    </recommendedName>
    <alternativeName>
        <fullName evidence="2">50S ribosomal protein L34</fullName>
    </alternativeName>
</protein>
<reference key="1">
    <citation type="submission" date="2007-10" db="EMBL/GenBank/DDBJ databases">
        <title>Genome sequence of Campylobacter concisus 13826 isolated from human feces.</title>
        <authorList>
            <person name="Fouts D.E."/>
            <person name="Mongodin E.F."/>
            <person name="Puiu D."/>
            <person name="Sebastian Y."/>
            <person name="Miller W.G."/>
            <person name="Mandrell R.E."/>
            <person name="On S."/>
            <person name="Nelson K.E."/>
        </authorList>
    </citation>
    <scope>NUCLEOTIDE SEQUENCE [LARGE SCALE GENOMIC DNA]</scope>
    <source>
        <strain>13826</strain>
    </source>
</reference>
<name>RL34_CAMC1</name>
<evidence type="ECO:0000255" key="1">
    <source>
        <dbReference type="HAMAP-Rule" id="MF_00391"/>
    </source>
</evidence>
<evidence type="ECO:0000305" key="2"/>
<organism>
    <name type="scientific">Campylobacter concisus (strain 13826)</name>
    <dbReference type="NCBI Taxonomy" id="360104"/>
    <lineage>
        <taxon>Bacteria</taxon>
        <taxon>Pseudomonadati</taxon>
        <taxon>Campylobacterota</taxon>
        <taxon>Epsilonproteobacteria</taxon>
        <taxon>Campylobacterales</taxon>
        <taxon>Campylobacteraceae</taxon>
        <taxon>Campylobacter</taxon>
    </lineage>
</organism>
<keyword id="KW-0687">Ribonucleoprotein</keyword>
<keyword id="KW-0689">Ribosomal protein</keyword>
<dbReference type="EMBL" id="CP000792">
    <property type="protein sequence ID" value="EAT97934.2"/>
    <property type="molecule type" value="Genomic_DNA"/>
</dbReference>
<dbReference type="RefSeq" id="WP_002940373.1">
    <property type="nucleotide sequence ID" value="NC_009802.2"/>
</dbReference>
<dbReference type="SMR" id="A7ZCY6"/>
<dbReference type="STRING" id="360104.CCC13826_2243"/>
<dbReference type="GeneID" id="61002433"/>
<dbReference type="KEGG" id="cco:CCC13826_2243"/>
<dbReference type="eggNOG" id="COG0230">
    <property type="taxonomic scope" value="Bacteria"/>
</dbReference>
<dbReference type="HOGENOM" id="CLU_129938_2_0_7"/>
<dbReference type="OrthoDB" id="9804164at2"/>
<dbReference type="Proteomes" id="UP000001121">
    <property type="component" value="Chromosome"/>
</dbReference>
<dbReference type="GO" id="GO:1990904">
    <property type="term" value="C:ribonucleoprotein complex"/>
    <property type="evidence" value="ECO:0007669"/>
    <property type="project" value="UniProtKB-KW"/>
</dbReference>
<dbReference type="GO" id="GO:0005840">
    <property type="term" value="C:ribosome"/>
    <property type="evidence" value="ECO:0007669"/>
    <property type="project" value="UniProtKB-KW"/>
</dbReference>
<dbReference type="GO" id="GO:0003735">
    <property type="term" value="F:structural constituent of ribosome"/>
    <property type="evidence" value="ECO:0007669"/>
    <property type="project" value="InterPro"/>
</dbReference>
<dbReference type="GO" id="GO:0006412">
    <property type="term" value="P:translation"/>
    <property type="evidence" value="ECO:0007669"/>
    <property type="project" value="UniProtKB-UniRule"/>
</dbReference>
<dbReference type="FunFam" id="1.10.287.3980:FF:000001">
    <property type="entry name" value="Mitochondrial ribosomal protein L34"/>
    <property type="match status" value="1"/>
</dbReference>
<dbReference type="Gene3D" id="1.10.287.3980">
    <property type="match status" value="1"/>
</dbReference>
<dbReference type="HAMAP" id="MF_00391">
    <property type="entry name" value="Ribosomal_bL34"/>
    <property type="match status" value="1"/>
</dbReference>
<dbReference type="InterPro" id="IPR000271">
    <property type="entry name" value="Ribosomal_bL34"/>
</dbReference>
<dbReference type="InterPro" id="IPR020939">
    <property type="entry name" value="Ribosomal_bL34_CS"/>
</dbReference>
<dbReference type="NCBIfam" id="TIGR01030">
    <property type="entry name" value="rpmH_bact"/>
    <property type="match status" value="1"/>
</dbReference>
<dbReference type="PANTHER" id="PTHR14503:SF4">
    <property type="entry name" value="LARGE RIBOSOMAL SUBUNIT PROTEIN BL34M"/>
    <property type="match status" value="1"/>
</dbReference>
<dbReference type="PANTHER" id="PTHR14503">
    <property type="entry name" value="MITOCHONDRIAL RIBOSOMAL PROTEIN 34 FAMILY MEMBER"/>
    <property type="match status" value="1"/>
</dbReference>
<dbReference type="Pfam" id="PF00468">
    <property type="entry name" value="Ribosomal_L34"/>
    <property type="match status" value="1"/>
</dbReference>
<dbReference type="PROSITE" id="PS00784">
    <property type="entry name" value="RIBOSOMAL_L34"/>
    <property type="match status" value="1"/>
</dbReference>
<gene>
    <name evidence="1" type="primary">rpmH</name>
    <name type="ordered locus">Ccon26_07690</name>
    <name type="ORF">CCC13826_2243</name>
</gene>